<keyword id="KW-0028">Amino-acid biosynthesis</keyword>
<keyword id="KW-0055">Arginine biosynthesis</keyword>
<keyword id="KW-0067">ATP-binding</keyword>
<keyword id="KW-0963">Cytoplasm</keyword>
<keyword id="KW-0436">Ligase</keyword>
<keyword id="KW-0547">Nucleotide-binding</keyword>
<keyword id="KW-1185">Reference proteome</keyword>
<sequence>MSAPKKVVLAYSGGLDTSIILKWLQTEYGCEVVTFTADLGQGEELEPARKKAEMMGAAGIYVEDLREEFVRDFVFPMFRANALYEGLYLLGTSIARPLISKRLVEIAEETGADAVSHGATGKGNDQVRFELCAYSLNPEIEVIAPWRKWELGSRTKLIEFAEKHQIPIAKDKRGEAPFSVDANLLHTSSEGKMLEDPAEEAPDHILQRITRPEDAPDTPEMVEITFEKGDAVAINGEPMSPATILTELNRLGGKHGIGILDLVENRFVGMKSRGIYETPGGTVLLEAHRGIEQITLDGASGHLKDSIMPRYAELIYNGFWFSPEREMLQALIDKSQEHVTGTVRLKLYKGAARCVARWSDHSLYSEAHVTFEEDMGAYDQSDAQGFIQLNALRLKLLSARNRKFNGS</sequence>
<reference key="1">
    <citation type="submission" date="2006-02" db="EMBL/GenBank/DDBJ databases">
        <title>Complete sequence of chromosome of Jannaschia sp. CCS1.</title>
        <authorList>
            <consortium name="US DOE Joint Genome Institute"/>
            <person name="Copeland A."/>
            <person name="Lucas S."/>
            <person name="Lapidus A."/>
            <person name="Barry K."/>
            <person name="Detter J.C."/>
            <person name="Glavina del Rio T."/>
            <person name="Hammon N."/>
            <person name="Israni S."/>
            <person name="Pitluck S."/>
            <person name="Brettin T."/>
            <person name="Bruce D."/>
            <person name="Han C."/>
            <person name="Tapia R."/>
            <person name="Gilna P."/>
            <person name="Chertkov O."/>
            <person name="Saunders E."/>
            <person name="Schmutz J."/>
            <person name="Larimer F."/>
            <person name="Land M."/>
            <person name="Kyrpides N."/>
            <person name="Lykidis A."/>
            <person name="Moran M.A."/>
            <person name="Belas R."/>
            <person name="Ye W."/>
            <person name="Buchan A."/>
            <person name="Gonzalez J.M."/>
            <person name="Schell M.A."/>
            <person name="Richardson P."/>
        </authorList>
    </citation>
    <scope>NUCLEOTIDE SEQUENCE [LARGE SCALE GENOMIC DNA]</scope>
    <source>
        <strain>CCS1</strain>
    </source>
</reference>
<proteinExistence type="inferred from homology"/>
<gene>
    <name evidence="1" type="primary">argG</name>
    <name type="ordered locus">Jann_0067</name>
</gene>
<comment type="catalytic activity">
    <reaction evidence="1">
        <text>L-citrulline + L-aspartate + ATP = 2-(N(omega)-L-arginino)succinate + AMP + diphosphate + H(+)</text>
        <dbReference type="Rhea" id="RHEA:10932"/>
        <dbReference type="ChEBI" id="CHEBI:15378"/>
        <dbReference type="ChEBI" id="CHEBI:29991"/>
        <dbReference type="ChEBI" id="CHEBI:30616"/>
        <dbReference type="ChEBI" id="CHEBI:33019"/>
        <dbReference type="ChEBI" id="CHEBI:57472"/>
        <dbReference type="ChEBI" id="CHEBI:57743"/>
        <dbReference type="ChEBI" id="CHEBI:456215"/>
        <dbReference type="EC" id="6.3.4.5"/>
    </reaction>
</comment>
<comment type="pathway">
    <text evidence="1">Amino-acid biosynthesis; L-arginine biosynthesis; L-arginine from L-ornithine and carbamoyl phosphate: step 2/3.</text>
</comment>
<comment type="subunit">
    <text evidence="1">Homotetramer.</text>
</comment>
<comment type="subcellular location">
    <subcellularLocation>
        <location evidence="1">Cytoplasm</location>
    </subcellularLocation>
</comment>
<comment type="similarity">
    <text evidence="1">Belongs to the argininosuccinate synthase family. Type 1 subfamily.</text>
</comment>
<dbReference type="EC" id="6.3.4.5" evidence="1"/>
<dbReference type="EMBL" id="CP000264">
    <property type="protein sequence ID" value="ABD52984.1"/>
    <property type="molecule type" value="Genomic_DNA"/>
</dbReference>
<dbReference type="RefSeq" id="WP_011453193.1">
    <property type="nucleotide sequence ID" value="NC_007802.1"/>
</dbReference>
<dbReference type="SMR" id="Q28WC8"/>
<dbReference type="STRING" id="290400.Jann_0067"/>
<dbReference type="KEGG" id="jan:Jann_0067"/>
<dbReference type="eggNOG" id="COG0137">
    <property type="taxonomic scope" value="Bacteria"/>
</dbReference>
<dbReference type="HOGENOM" id="CLU_032784_4_2_5"/>
<dbReference type="OrthoDB" id="9801641at2"/>
<dbReference type="UniPathway" id="UPA00068">
    <property type="reaction ID" value="UER00113"/>
</dbReference>
<dbReference type="Proteomes" id="UP000008326">
    <property type="component" value="Chromosome"/>
</dbReference>
<dbReference type="GO" id="GO:0005737">
    <property type="term" value="C:cytoplasm"/>
    <property type="evidence" value="ECO:0007669"/>
    <property type="project" value="UniProtKB-SubCell"/>
</dbReference>
<dbReference type="GO" id="GO:0004055">
    <property type="term" value="F:argininosuccinate synthase activity"/>
    <property type="evidence" value="ECO:0007669"/>
    <property type="project" value="UniProtKB-UniRule"/>
</dbReference>
<dbReference type="GO" id="GO:0005524">
    <property type="term" value="F:ATP binding"/>
    <property type="evidence" value="ECO:0007669"/>
    <property type="project" value="UniProtKB-UniRule"/>
</dbReference>
<dbReference type="GO" id="GO:0000053">
    <property type="term" value="P:argininosuccinate metabolic process"/>
    <property type="evidence" value="ECO:0007669"/>
    <property type="project" value="TreeGrafter"/>
</dbReference>
<dbReference type="GO" id="GO:0006526">
    <property type="term" value="P:L-arginine biosynthetic process"/>
    <property type="evidence" value="ECO:0007669"/>
    <property type="project" value="UniProtKB-UniRule"/>
</dbReference>
<dbReference type="GO" id="GO:0000050">
    <property type="term" value="P:urea cycle"/>
    <property type="evidence" value="ECO:0007669"/>
    <property type="project" value="TreeGrafter"/>
</dbReference>
<dbReference type="CDD" id="cd01999">
    <property type="entry name" value="ASS"/>
    <property type="match status" value="1"/>
</dbReference>
<dbReference type="FunFam" id="3.40.50.620:FF:000019">
    <property type="entry name" value="Argininosuccinate synthase"/>
    <property type="match status" value="1"/>
</dbReference>
<dbReference type="FunFam" id="3.90.1260.10:FF:000007">
    <property type="entry name" value="Argininosuccinate synthase"/>
    <property type="match status" value="1"/>
</dbReference>
<dbReference type="Gene3D" id="3.90.1260.10">
    <property type="entry name" value="Argininosuccinate synthetase, chain A, domain 2"/>
    <property type="match status" value="1"/>
</dbReference>
<dbReference type="Gene3D" id="3.40.50.620">
    <property type="entry name" value="HUPs"/>
    <property type="match status" value="1"/>
</dbReference>
<dbReference type="Gene3D" id="1.20.5.470">
    <property type="entry name" value="Single helix bin"/>
    <property type="match status" value="1"/>
</dbReference>
<dbReference type="HAMAP" id="MF_00005">
    <property type="entry name" value="Arg_succ_synth_type1"/>
    <property type="match status" value="1"/>
</dbReference>
<dbReference type="InterPro" id="IPR048268">
    <property type="entry name" value="Arginosuc_syn_C"/>
</dbReference>
<dbReference type="InterPro" id="IPR048267">
    <property type="entry name" value="Arginosuc_syn_N"/>
</dbReference>
<dbReference type="InterPro" id="IPR001518">
    <property type="entry name" value="Arginosuc_synth"/>
</dbReference>
<dbReference type="InterPro" id="IPR018223">
    <property type="entry name" value="Arginosuc_synth_CS"/>
</dbReference>
<dbReference type="InterPro" id="IPR023434">
    <property type="entry name" value="Arginosuc_synth_type_1_subfam"/>
</dbReference>
<dbReference type="InterPro" id="IPR024074">
    <property type="entry name" value="AS_cat/multimer_dom_body"/>
</dbReference>
<dbReference type="InterPro" id="IPR014729">
    <property type="entry name" value="Rossmann-like_a/b/a_fold"/>
</dbReference>
<dbReference type="NCBIfam" id="TIGR00032">
    <property type="entry name" value="argG"/>
    <property type="match status" value="1"/>
</dbReference>
<dbReference type="NCBIfam" id="NF001770">
    <property type="entry name" value="PRK00509.1"/>
    <property type="match status" value="1"/>
</dbReference>
<dbReference type="PANTHER" id="PTHR11587">
    <property type="entry name" value="ARGININOSUCCINATE SYNTHASE"/>
    <property type="match status" value="1"/>
</dbReference>
<dbReference type="PANTHER" id="PTHR11587:SF2">
    <property type="entry name" value="ARGININOSUCCINATE SYNTHASE"/>
    <property type="match status" value="1"/>
</dbReference>
<dbReference type="Pfam" id="PF20979">
    <property type="entry name" value="Arginosuc_syn_C"/>
    <property type="match status" value="1"/>
</dbReference>
<dbReference type="Pfam" id="PF00764">
    <property type="entry name" value="Arginosuc_synth"/>
    <property type="match status" value="1"/>
</dbReference>
<dbReference type="SUPFAM" id="SSF52402">
    <property type="entry name" value="Adenine nucleotide alpha hydrolases-like"/>
    <property type="match status" value="1"/>
</dbReference>
<dbReference type="SUPFAM" id="SSF69864">
    <property type="entry name" value="Argininosuccinate synthetase, C-terminal domain"/>
    <property type="match status" value="1"/>
</dbReference>
<dbReference type="PROSITE" id="PS00564">
    <property type="entry name" value="ARGININOSUCCIN_SYN_1"/>
    <property type="match status" value="1"/>
</dbReference>
<dbReference type="PROSITE" id="PS00565">
    <property type="entry name" value="ARGININOSUCCIN_SYN_2"/>
    <property type="match status" value="1"/>
</dbReference>
<accession>Q28WC8</accession>
<evidence type="ECO:0000255" key="1">
    <source>
        <dbReference type="HAMAP-Rule" id="MF_00005"/>
    </source>
</evidence>
<organism>
    <name type="scientific">Jannaschia sp. (strain CCS1)</name>
    <dbReference type="NCBI Taxonomy" id="290400"/>
    <lineage>
        <taxon>Bacteria</taxon>
        <taxon>Pseudomonadati</taxon>
        <taxon>Pseudomonadota</taxon>
        <taxon>Alphaproteobacteria</taxon>
        <taxon>Rhodobacterales</taxon>
        <taxon>Roseobacteraceae</taxon>
        <taxon>Jannaschia</taxon>
    </lineage>
</organism>
<protein>
    <recommendedName>
        <fullName evidence="1">Argininosuccinate synthase</fullName>
        <ecNumber evidence="1">6.3.4.5</ecNumber>
    </recommendedName>
    <alternativeName>
        <fullName evidence="1">Citrulline--aspartate ligase</fullName>
    </alternativeName>
</protein>
<feature type="chain" id="PRO_0000263933" description="Argininosuccinate synthase">
    <location>
        <begin position="1"/>
        <end position="407"/>
    </location>
</feature>
<feature type="binding site" evidence="1">
    <location>
        <begin position="10"/>
        <end position="18"/>
    </location>
    <ligand>
        <name>ATP</name>
        <dbReference type="ChEBI" id="CHEBI:30616"/>
    </ligand>
</feature>
<feature type="binding site" evidence="1">
    <location>
        <position position="37"/>
    </location>
    <ligand>
        <name>ATP</name>
        <dbReference type="ChEBI" id="CHEBI:30616"/>
    </ligand>
</feature>
<feature type="binding site" evidence="1">
    <location>
        <position position="88"/>
    </location>
    <ligand>
        <name>L-citrulline</name>
        <dbReference type="ChEBI" id="CHEBI:57743"/>
    </ligand>
</feature>
<feature type="binding site" evidence="1">
    <location>
        <position position="93"/>
    </location>
    <ligand>
        <name>L-citrulline</name>
        <dbReference type="ChEBI" id="CHEBI:57743"/>
    </ligand>
</feature>
<feature type="binding site" evidence="1">
    <location>
        <position position="118"/>
    </location>
    <ligand>
        <name>ATP</name>
        <dbReference type="ChEBI" id="CHEBI:30616"/>
    </ligand>
</feature>
<feature type="binding site" evidence="1">
    <location>
        <position position="120"/>
    </location>
    <ligand>
        <name>L-aspartate</name>
        <dbReference type="ChEBI" id="CHEBI:29991"/>
    </ligand>
</feature>
<feature type="binding site" evidence="1">
    <location>
        <position position="124"/>
    </location>
    <ligand>
        <name>L-aspartate</name>
        <dbReference type="ChEBI" id="CHEBI:29991"/>
    </ligand>
</feature>
<feature type="binding site" evidence="1">
    <location>
        <position position="124"/>
    </location>
    <ligand>
        <name>L-citrulline</name>
        <dbReference type="ChEBI" id="CHEBI:57743"/>
    </ligand>
</feature>
<feature type="binding site" evidence="1">
    <location>
        <position position="125"/>
    </location>
    <ligand>
        <name>L-aspartate</name>
        <dbReference type="ChEBI" id="CHEBI:29991"/>
    </ligand>
</feature>
<feature type="binding site" evidence="1">
    <location>
        <position position="128"/>
    </location>
    <ligand>
        <name>L-citrulline</name>
        <dbReference type="ChEBI" id="CHEBI:57743"/>
    </ligand>
</feature>
<feature type="binding site" evidence="1">
    <location>
        <position position="179"/>
    </location>
    <ligand>
        <name>L-citrulline</name>
        <dbReference type="ChEBI" id="CHEBI:57743"/>
    </ligand>
</feature>
<feature type="binding site" evidence="1">
    <location>
        <position position="188"/>
    </location>
    <ligand>
        <name>L-citrulline</name>
        <dbReference type="ChEBI" id="CHEBI:57743"/>
    </ligand>
</feature>
<feature type="binding site" evidence="1">
    <location>
        <position position="264"/>
    </location>
    <ligand>
        <name>L-citrulline</name>
        <dbReference type="ChEBI" id="CHEBI:57743"/>
    </ligand>
</feature>
<feature type="binding site" evidence="1">
    <location>
        <position position="276"/>
    </location>
    <ligand>
        <name>L-citrulline</name>
        <dbReference type="ChEBI" id="CHEBI:57743"/>
    </ligand>
</feature>
<name>ASSY_JANSC</name>